<sequence>MTSVVVVGTQWGDEGKGKITDFLSSDAEVIARYQGGDNAGHTIVIDNKKFKLHLIPSGIFFPEKISVIGNGVVVNPKSLVKELAYLHEEGVTTDNLRISDRAHVILPYHIKLDQLQEEAKGDNKIGTTIKGIGPAYMDKAARVGIRIADLLDRDIFAERLKTNLAEKNRLFEKMYDSAPIAFDEIFEEYYGYGQEIKKYVTDTSVILNDALDAGKRVLFEGAQGVMLDIDQGTYPFVTSSNPVAGGVTIGSGVGPSKINKVVGVCKAYTSRVGDGPFPTELFDEVGERIREIGHEYGTTTGRPRRVGWFDSVVMRHSRRVSGITNLSLNSIDVLSGLETVKICVAYDLDGKRIDHYPASLEQLKRCKPIYEELPGWSEDITGVRSLEDLPENARNYVRRIGELVGVRISTFSVGPGREQTNILESVWATI</sequence>
<accession>C0MFY0</accession>
<name>PURA_STRS7</name>
<evidence type="ECO:0000255" key="1">
    <source>
        <dbReference type="HAMAP-Rule" id="MF_00011"/>
    </source>
</evidence>
<protein>
    <recommendedName>
        <fullName evidence="1">Adenylosuccinate synthetase</fullName>
        <shortName evidence="1">AMPSase</shortName>
        <shortName evidence="1">AdSS</shortName>
        <ecNumber evidence="1">6.3.4.4</ecNumber>
    </recommendedName>
    <alternativeName>
        <fullName evidence="1">IMP--aspartate ligase</fullName>
    </alternativeName>
</protein>
<proteinExistence type="inferred from homology"/>
<gene>
    <name evidence="1" type="primary">purA</name>
    <name type="ordered locus">SZO_18240</name>
</gene>
<keyword id="KW-0963">Cytoplasm</keyword>
<keyword id="KW-0342">GTP-binding</keyword>
<keyword id="KW-0436">Ligase</keyword>
<keyword id="KW-0460">Magnesium</keyword>
<keyword id="KW-0479">Metal-binding</keyword>
<keyword id="KW-0547">Nucleotide-binding</keyword>
<keyword id="KW-0658">Purine biosynthesis</keyword>
<feature type="chain" id="PRO_1000201765" description="Adenylosuccinate synthetase">
    <location>
        <begin position="1"/>
        <end position="430"/>
    </location>
</feature>
<feature type="active site" description="Proton acceptor" evidence="1">
    <location>
        <position position="13"/>
    </location>
</feature>
<feature type="active site" description="Proton donor" evidence="1">
    <location>
        <position position="41"/>
    </location>
</feature>
<feature type="binding site" evidence="1">
    <location>
        <begin position="12"/>
        <end position="18"/>
    </location>
    <ligand>
        <name>GTP</name>
        <dbReference type="ChEBI" id="CHEBI:37565"/>
    </ligand>
</feature>
<feature type="binding site" description="in other chain" evidence="1">
    <location>
        <begin position="13"/>
        <end position="16"/>
    </location>
    <ligand>
        <name>IMP</name>
        <dbReference type="ChEBI" id="CHEBI:58053"/>
        <note>ligand shared between dimeric partners</note>
    </ligand>
</feature>
<feature type="binding site" evidence="1">
    <location>
        <position position="13"/>
    </location>
    <ligand>
        <name>Mg(2+)</name>
        <dbReference type="ChEBI" id="CHEBI:18420"/>
    </ligand>
</feature>
<feature type="binding site" description="in other chain" evidence="1">
    <location>
        <begin position="38"/>
        <end position="41"/>
    </location>
    <ligand>
        <name>IMP</name>
        <dbReference type="ChEBI" id="CHEBI:58053"/>
        <note>ligand shared between dimeric partners</note>
    </ligand>
</feature>
<feature type="binding site" evidence="1">
    <location>
        <begin position="40"/>
        <end position="42"/>
    </location>
    <ligand>
        <name>GTP</name>
        <dbReference type="ChEBI" id="CHEBI:37565"/>
    </ligand>
</feature>
<feature type="binding site" evidence="1">
    <location>
        <position position="40"/>
    </location>
    <ligand>
        <name>Mg(2+)</name>
        <dbReference type="ChEBI" id="CHEBI:18420"/>
    </ligand>
</feature>
<feature type="binding site" description="in other chain" evidence="1">
    <location>
        <position position="128"/>
    </location>
    <ligand>
        <name>IMP</name>
        <dbReference type="ChEBI" id="CHEBI:58053"/>
        <note>ligand shared between dimeric partners</note>
    </ligand>
</feature>
<feature type="binding site" evidence="1">
    <location>
        <position position="142"/>
    </location>
    <ligand>
        <name>IMP</name>
        <dbReference type="ChEBI" id="CHEBI:58053"/>
        <note>ligand shared between dimeric partners</note>
    </ligand>
</feature>
<feature type="binding site" description="in other chain" evidence="1">
    <location>
        <position position="223"/>
    </location>
    <ligand>
        <name>IMP</name>
        <dbReference type="ChEBI" id="CHEBI:58053"/>
        <note>ligand shared between dimeric partners</note>
    </ligand>
</feature>
<feature type="binding site" description="in other chain" evidence="1">
    <location>
        <position position="238"/>
    </location>
    <ligand>
        <name>IMP</name>
        <dbReference type="ChEBI" id="CHEBI:58053"/>
        <note>ligand shared between dimeric partners</note>
    </ligand>
</feature>
<feature type="binding site" evidence="1">
    <location>
        <begin position="298"/>
        <end position="304"/>
    </location>
    <ligand>
        <name>substrate</name>
    </ligand>
</feature>
<feature type="binding site" description="in other chain" evidence="1">
    <location>
        <position position="302"/>
    </location>
    <ligand>
        <name>IMP</name>
        <dbReference type="ChEBI" id="CHEBI:58053"/>
        <note>ligand shared between dimeric partners</note>
    </ligand>
</feature>
<feature type="binding site" evidence="1">
    <location>
        <position position="304"/>
    </location>
    <ligand>
        <name>GTP</name>
        <dbReference type="ChEBI" id="CHEBI:37565"/>
    </ligand>
</feature>
<feature type="binding site" evidence="1">
    <location>
        <begin position="330"/>
        <end position="332"/>
    </location>
    <ligand>
        <name>GTP</name>
        <dbReference type="ChEBI" id="CHEBI:37565"/>
    </ligand>
</feature>
<feature type="binding site" evidence="1">
    <location>
        <begin position="412"/>
        <end position="414"/>
    </location>
    <ligand>
        <name>GTP</name>
        <dbReference type="ChEBI" id="CHEBI:37565"/>
    </ligand>
</feature>
<dbReference type="EC" id="6.3.4.4" evidence="1"/>
<dbReference type="EMBL" id="FM204884">
    <property type="protein sequence ID" value="CAX00722.1"/>
    <property type="molecule type" value="Genomic_DNA"/>
</dbReference>
<dbReference type="SMR" id="C0MFY0"/>
<dbReference type="KEGG" id="seq:SZO_18240"/>
<dbReference type="eggNOG" id="COG0104">
    <property type="taxonomic scope" value="Bacteria"/>
</dbReference>
<dbReference type="HOGENOM" id="CLU_029848_0_0_9"/>
<dbReference type="UniPathway" id="UPA00075">
    <property type="reaction ID" value="UER00335"/>
</dbReference>
<dbReference type="Proteomes" id="UP000001368">
    <property type="component" value="Chromosome"/>
</dbReference>
<dbReference type="GO" id="GO:0005737">
    <property type="term" value="C:cytoplasm"/>
    <property type="evidence" value="ECO:0007669"/>
    <property type="project" value="UniProtKB-SubCell"/>
</dbReference>
<dbReference type="GO" id="GO:0004019">
    <property type="term" value="F:adenylosuccinate synthase activity"/>
    <property type="evidence" value="ECO:0007669"/>
    <property type="project" value="UniProtKB-UniRule"/>
</dbReference>
<dbReference type="GO" id="GO:0005525">
    <property type="term" value="F:GTP binding"/>
    <property type="evidence" value="ECO:0007669"/>
    <property type="project" value="UniProtKB-UniRule"/>
</dbReference>
<dbReference type="GO" id="GO:0000287">
    <property type="term" value="F:magnesium ion binding"/>
    <property type="evidence" value="ECO:0007669"/>
    <property type="project" value="UniProtKB-UniRule"/>
</dbReference>
<dbReference type="GO" id="GO:0044208">
    <property type="term" value="P:'de novo' AMP biosynthetic process"/>
    <property type="evidence" value="ECO:0007669"/>
    <property type="project" value="UniProtKB-UniRule"/>
</dbReference>
<dbReference type="GO" id="GO:0046040">
    <property type="term" value="P:IMP metabolic process"/>
    <property type="evidence" value="ECO:0007669"/>
    <property type="project" value="TreeGrafter"/>
</dbReference>
<dbReference type="CDD" id="cd03108">
    <property type="entry name" value="AdSS"/>
    <property type="match status" value="1"/>
</dbReference>
<dbReference type="FunFam" id="1.10.300.10:FF:000001">
    <property type="entry name" value="Adenylosuccinate synthetase"/>
    <property type="match status" value="1"/>
</dbReference>
<dbReference type="FunFam" id="3.90.170.10:FF:000001">
    <property type="entry name" value="Adenylosuccinate synthetase"/>
    <property type="match status" value="1"/>
</dbReference>
<dbReference type="Gene3D" id="3.40.440.10">
    <property type="entry name" value="Adenylosuccinate Synthetase, subunit A, domain 1"/>
    <property type="match status" value="1"/>
</dbReference>
<dbReference type="Gene3D" id="1.10.300.10">
    <property type="entry name" value="Adenylosuccinate Synthetase, subunit A, domain 2"/>
    <property type="match status" value="1"/>
</dbReference>
<dbReference type="Gene3D" id="3.90.170.10">
    <property type="entry name" value="Adenylosuccinate Synthetase, subunit A, domain 3"/>
    <property type="match status" value="1"/>
</dbReference>
<dbReference type="HAMAP" id="MF_00011">
    <property type="entry name" value="Adenylosucc_synth"/>
    <property type="match status" value="1"/>
</dbReference>
<dbReference type="InterPro" id="IPR018220">
    <property type="entry name" value="Adenylosuccin_syn_GTP-bd"/>
</dbReference>
<dbReference type="InterPro" id="IPR033128">
    <property type="entry name" value="Adenylosuccin_syn_Lys_AS"/>
</dbReference>
<dbReference type="InterPro" id="IPR042109">
    <property type="entry name" value="Adenylosuccinate_synth_dom1"/>
</dbReference>
<dbReference type="InterPro" id="IPR042110">
    <property type="entry name" value="Adenylosuccinate_synth_dom2"/>
</dbReference>
<dbReference type="InterPro" id="IPR042111">
    <property type="entry name" value="Adenylosuccinate_synth_dom3"/>
</dbReference>
<dbReference type="InterPro" id="IPR001114">
    <property type="entry name" value="Adenylosuccinate_synthetase"/>
</dbReference>
<dbReference type="InterPro" id="IPR027417">
    <property type="entry name" value="P-loop_NTPase"/>
</dbReference>
<dbReference type="NCBIfam" id="NF002223">
    <property type="entry name" value="PRK01117.1"/>
    <property type="match status" value="1"/>
</dbReference>
<dbReference type="NCBIfam" id="TIGR00184">
    <property type="entry name" value="purA"/>
    <property type="match status" value="1"/>
</dbReference>
<dbReference type="PANTHER" id="PTHR11846">
    <property type="entry name" value="ADENYLOSUCCINATE SYNTHETASE"/>
    <property type="match status" value="1"/>
</dbReference>
<dbReference type="PANTHER" id="PTHR11846:SF0">
    <property type="entry name" value="ADENYLOSUCCINATE SYNTHETASE"/>
    <property type="match status" value="1"/>
</dbReference>
<dbReference type="Pfam" id="PF00709">
    <property type="entry name" value="Adenylsucc_synt"/>
    <property type="match status" value="1"/>
</dbReference>
<dbReference type="SMART" id="SM00788">
    <property type="entry name" value="Adenylsucc_synt"/>
    <property type="match status" value="1"/>
</dbReference>
<dbReference type="SUPFAM" id="SSF52540">
    <property type="entry name" value="P-loop containing nucleoside triphosphate hydrolases"/>
    <property type="match status" value="1"/>
</dbReference>
<dbReference type="PROSITE" id="PS01266">
    <property type="entry name" value="ADENYLOSUCCIN_SYN_1"/>
    <property type="match status" value="1"/>
</dbReference>
<dbReference type="PROSITE" id="PS00513">
    <property type="entry name" value="ADENYLOSUCCIN_SYN_2"/>
    <property type="match status" value="1"/>
</dbReference>
<reference key="1">
    <citation type="journal article" date="2009" name="PLoS Pathog.">
        <title>Genomic evidence for the evolution of Streptococcus equi: host restriction, increased virulence, and genetic exchange with human pathogens.</title>
        <authorList>
            <person name="Holden M.T.G."/>
            <person name="Heather Z."/>
            <person name="Paillot R."/>
            <person name="Steward K.F."/>
            <person name="Webb K."/>
            <person name="Ainslie F."/>
            <person name="Jourdan T."/>
            <person name="Bason N.C."/>
            <person name="Holroyd N.E."/>
            <person name="Mungall K."/>
            <person name="Quail M.A."/>
            <person name="Sanders M."/>
            <person name="Simmonds M."/>
            <person name="Willey D."/>
            <person name="Brooks K."/>
            <person name="Aanensen D.M."/>
            <person name="Spratt B.G."/>
            <person name="Jolley K.A."/>
            <person name="Maiden M.C.J."/>
            <person name="Kehoe M."/>
            <person name="Chanter N."/>
            <person name="Bentley S.D."/>
            <person name="Robinson C."/>
            <person name="Maskell D.J."/>
            <person name="Parkhill J."/>
            <person name="Waller A.S."/>
        </authorList>
    </citation>
    <scope>NUCLEOTIDE SEQUENCE [LARGE SCALE GENOMIC DNA]</scope>
    <source>
        <strain>H70</strain>
    </source>
</reference>
<comment type="function">
    <text evidence="1">Plays an important role in the de novo pathway of purine nucleotide biosynthesis. Catalyzes the first committed step in the biosynthesis of AMP from IMP.</text>
</comment>
<comment type="catalytic activity">
    <reaction evidence="1">
        <text>IMP + L-aspartate + GTP = N(6)-(1,2-dicarboxyethyl)-AMP + GDP + phosphate + 2 H(+)</text>
        <dbReference type="Rhea" id="RHEA:15753"/>
        <dbReference type="ChEBI" id="CHEBI:15378"/>
        <dbReference type="ChEBI" id="CHEBI:29991"/>
        <dbReference type="ChEBI" id="CHEBI:37565"/>
        <dbReference type="ChEBI" id="CHEBI:43474"/>
        <dbReference type="ChEBI" id="CHEBI:57567"/>
        <dbReference type="ChEBI" id="CHEBI:58053"/>
        <dbReference type="ChEBI" id="CHEBI:58189"/>
        <dbReference type="EC" id="6.3.4.4"/>
    </reaction>
</comment>
<comment type="cofactor">
    <cofactor evidence="1">
        <name>Mg(2+)</name>
        <dbReference type="ChEBI" id="CHEBI:18420"/>
    </cofactor>
    <text evidence="1">Binds 1 Mg(2+) ion per subunit.</text>
</comment>
<comment type="pathway">
    <text evidence="1">Purine metabolism; AMP biosynthesis via de novo pathway; AMP from IMP: step 1/2.</text>
</comment>
<comment type="subunit">
    <text evidence="1">Homodimer.</text>
</comment>
<comment type="subcellular location">
    <subcellularLocation>
        <location evidence="1">Cytoplasm</location>
    </subcellularLocation>
</comment>
<comment type="similarity">
    <text evidence="1">Belongs to the adenylosuccinate synthetase family.</text>
</comment>
<organism>
    <name type="scientific">Streptococcus equi subsp. zooepidemicus (strain H70)</name>
    <dbReference type="NCBI Taxonomy" id="553483"/>
    <lineage>
        <taxon>Bacteria</taxon>
        <taxon>Bacillati</taxon>
        <taxon>Bacillota</taxon>
        <taxon>Bacilli</taxon>
        <taxon>Lactobacillales</taxon>
        <taxon>Streptococcaceae</taxon>
        <taxon>Streptococcus</taxon>
    </lineage>
</organism>